<gene>
    <name evidence="4 5" type="primary">TPS3</name>
</gene>
<protein>
    <recommendedName>
        <fullName evidence="4 5">Terpene synthase 3</fullName>
        <shortName evidence="4 5">PnTPS3</shortName>
    </recommendedName>
    <alternativeName>
        <fullName evidence="5">Copaene synthase</fullName>
        <shortName evidence="4">PnCop</shortName>
        <ecNumber evidence="3">4.2.3.133</ecNumber>
    </alternativeName>
    <alternativeName>
        <fullName evidence="4">Germacrene D synthase</fullName>
        <shortName evidence="4">PnGDS</shortName>
        <ecNumber evidence="3">4.2.3.-</ecNumber>
    </alternativeName>
</protein>
<organism>
    <name type="scientific">Piper nigrum</name>
    <name type="common">Black pepper</name>
    <dbReference type="NCBI Taxonomy" id="13216"/>
    <lineage>
        <taxon>Eukaryota</taxon>
        <taxon>Viridiplantae</taxon>
        <taxon>Streptophyta</taxon>
        <taxon>Embryophyta</taxon>
        <taxon>Tracheophyta</taxon>
        <taxon>Spermatophyta</taxon>
        <taxon>Magnoliopsida</taxon>
        <taxon>Magnoliidae</taxon>
        <taxon>Piperales</taxon>
        <taxon>Piperaceae</taxon>
        <taxon>Piper</taxon>
    </lineage>
</organism>
<reference key="1">
    <citation type="submission" date="2017-05" db="EMBL/GenBank/DDBJ databases">
        <authorList>
            <person name="Song R."/>
            <person name="Chenine A.L."/>
            <person name="Ruprecht R.M."/>
        </authorList>
    </citation>
    <scope>NUCLEOTIDE SEQUENCE [MRNA]</scope>
    <source>
        <tissue>Fruit</tissue>
    </source>
</reference>
<reference key="2">
    <citation type="journal article" date="2018" name="Arch. Biochem. Biophys.">
        <title>Molecular cloning and functional characterization of three terpene synthases from unripe fruit of black pepper (Piper nigrum).</title>
        <authorList>
            <person name="Jin Z."/>
            <person name="Kwon M."/>
            <person name="Lee A.-R."/>
            <person name="Ro D.-K."/>
            <person name="Wungsintaweekul J."/>
            <person name="Kim S.-U."/>
        </authorList>
    </citation>
    <scope>FUNCTION</scope>
    <scope>CATALYTIC ACTIVITY</scope>
    <scope>PATHWAY</scope>
    <scope>BIOPHYSICOCHEMICAL PROPERTIES</scope>
    <scope>TISSUE SPECIFICITY</scope>
</reference>
<accession>A0A2R4QKX7</accession>
<sequence length="561" mass="64520">MGFSFVTNAAIAAHMPPSKQEIIRRDAKFHPTIWGDHFIQYLDTPIDPPQKVVERMEELKKQVRAMLRDTNLDISLIDWIQRTGIAYHFEEQIAETLKHVYEASTLTTDSSKYLEHFDLRHIALRFRLSRQQGYHASTDVFKRFMDEGDKFKQSIANDIEGMLSLYEASFMSVKGEAILDEALAFTGKNLEATLPNLTGSLAQQVECALEIPLRRCTDLVKARRSISCYENKNGRNEVVLELAKLDFNLLQAVHQRELALLTSWWNELGASTNLPFTRNRVVELYFWVLEVLSKPEHARAREIMVKSIIMASILDDVYDVYGTLEELQLFTSALERWDLQALEQLPNTIKTAYSIVLRVFKEYEDLLKPHEVYRVGFARKALIPYMNAYFLEAKWFYSHHHPSFEEYMDNALVSCGYPFLFLVSLVGLDEIATKDVFEWAIKRPNIVVAASMICRNRDDIVGHKEEQERGDVPSGVECYTKDHGCTEEEACMALQAMVDDAWKDINCELLHDTSMPKAILMRAVGLARIISILYQYRDGYSDSTHETKAHVTQVLVQPIPL</sequence>
<proteinExistence type="evidence at protein level"/>
<comment type="function">
    <text evidence="3">Sesquiterpene synthase involved in the biosynthesis of volatile compounds that contribute to the characteristic flavors of black pepper (PubMed:29248443). Mediates the conversion of (2E,6E)-farnesyl diphosphate (FPP) into alpha-copaene and germacrene D (PubMed:29248443).</text>
</comment>
<comment type="catalytic activity">
    <reaction evidence="3">
        <text>(2E,6E)-farnesyl diphosphate = germacrene D + diphosphate</text>
        <dbReference type="Rhea" id="RHEA:68716"/>
        <dbReference type="ChEBI" id="CHEBI:33019"/>
        <dbReference type="ChEBI" id="CHEBI:49045"/>
        <dbReference type="ChEBI" id="CHEBI:175763"/>
    </reaction>
    <physiologicalReaction direction="left-to-right" evidence="3">
        <dbReference type="Rhea" id="RHEA:68717"/>
    </physiologicalReaction>
</comment>
<comment type="catalytic activity">
    <reaction evidence="3">
        <text>(2E,6E)-farnesyl diphosphate = alpha-copaene + diphosphate</text>
        <dbReference type="Rhea" id="RHEA:33991"/>
        <dbReference type="ChEBI" id="CHEBI:10221"/>
        <dbReference type="ChEBI" id="CHEBI:33019"/>
        <dbReference type="ChEBI" id="CHEBI:175763"/>
        <dbReference type="EC" id="4.2.3.133"/>
    </reaction>
    <physiologicalReaction direction="left-to-right" evidence="3">
        <dbReference type="Rhea" id="RHEA:33992"/>
    </physiologicalReaction>
</comment>
<comment type="cofactor">
    <cofactor evidence="1">
        <name>Mg(2+)</name>
        <dbReference type="ChEBI" id="CHEBI:18420"/>
    </cofactor>
    <cofactor evidence="1">
        <name>Mn(2+)</name>
        <dbReference type="ChEBI" id="CHEBI:29035"/>
    </cofactor>
    <text evidence="1">Binds 3 Mg(2+) or Mn(2+) ions per subunit.</text>
</comment>
<comment type="biophysicochemical properties">
    <kinetics>
        <KM evidence="3">9.152 uM for (2E,6E)-farnesyl diphosphate</KM>
        <text evidence="3">kcat is 0.185 sec(-1) with (2E,6E)-farnesyl diphosphate as substrate.</text>
    </kinetics>
</comment>
<comment type="pathway">
    <text evidence="3">Secondary metabolite biosynthesis; terpenoid biosynthesis.</text>
</comment>
<comment type="tissue specificity">
    <text evidence="3">Mostly expressed in stems amd leaves, and, to a lower extent, in roots and fruits.</text>
</comment>
<comment type="domain">
    <text evidence="2">The Asp-Asp-Xaa-Xaa-Asp/Glu (DDXXD/E) motif is important for the catalytic activity, presumably through binding to Mg(2+).</text>
</comment>
<comment type="similarity">
    <text evidence="6">Belongs to the terpene synthase family. Tpsa subfamily.</text>
</comment>
<dbReference type="EC" id="4.2.3.133" evidence="3"/>
<dbReference type="EC" id="4.2.3.-" evidence="3"/>
<dbReference type="EMBL" id="MF104556">
    <property type="protein sequence ID" value="AVY53326.1"/>
    <property type="molecule type" value="mRNA"/>
</dbReference>
<dbReference type="SMR" id="A0A2R4QKX7"/>
<dbReference type="UniPathway" id="UPA00213"/>
<dbReference type="GO" id="GO:0102877">
    <property type="term" value="F:alpha-copaene synthase activity"/>
    <property type="evidence" value="ECO:0000314"/>
    <property type="project" value="UniProtKB"/>
</dbReference>
<dbReference type="GO" id="GO:0052577">
    <property type="term" value="F:germacrene-D synthase activity"/>
    <property type="evidence" value="ECO:0000314"/>
    <property type="project" value="UniProtKB"/>
</dbReference>
<dbReference type="GO" id="GO:0000287">
    <property type="term" value="F:magnesium ion binding"/>
    <property type="evidence" value="ECO:0007669"/>
    <property type="project" value="InterPro"/>
</dbReference>
<dbReference type="GO" id="GO:0010333">
    <property type="term" value="F:terpene synthase activity"/>
    <property type="evidence" value="ECO:0000314"/>
    <property type="project" value="UniProtKB"/>
</dbReference>
<dbReference type="GO" id="GO:1901931">
    <property type="term" value="P:alpha-copaene biosynthetic process"/>
    <property type="evidence" value="ECO:0000314"/>
    <property type="project" value="UniProtKB"/>
</dbReference>
<dbReference type="GO" id="GO:0016102">
    <property type="term" value="P:diterpenoid biosynthetic process"/>
    <property type="evidence" value="ECO:0007669"/>
    <property type="project" value="InterPro"/>
</dbReference>
<dbReference type="GO" id="GO:0010597">
    <property type="term" value="P:green leaf volatile biosynthetic process"/>
    <property type="evidence" value="ECO:0000314"/>
    <property type="project" value="UniProtKB"/>
</dbReference>
<dbReference type="GO" id="GO:0051762">
    <property type="term" value="P:sesquiterpene biosynthetic process"/>
    <property type="evidence" value="ECO:0000314"/>
    <property type="project" value="UniProtKB"/>
</dbReference>
<dbReference type="CDD" id="cd00684">
    <property type="entry name" value="Terpene_cyclase_plant_C1"/>
    <property type="match status" value="1"/>
</dbReference>
<dbReference type="FunFam" id="1.10.600.10:FF:000007">
    <property type="entry name" value="Isoprene synthase, chloroplastic"/>
    <property type="match status" value="1"/>
</dbReference>
<dbReference type="FunFam" id="1.50.10.130:FF:000001">
    <property type="entry name" value="Isoprene synthase, chloroplastic"/>
    <property type="match status" value="1"/>
</dbReference>
<dbReference type="Gene3D" id="1.10.600.10">
    <property type="entry name" value="Farnesyl Diphosphate Synthase"/>
    <property type="match status" value="1"/>
</dbReference>
<dbReference type="Gene3D" id="1.50.10.130">
    <property type="entry name" value="Terpene synthase, N-terminal domain"/>
    <property type="match status" value="1"/>
</dbReference>
<dbReference type="InterPro" id="IPR008949">
    <property type="entry name" value="Isoprenoid_synthase_dom_sf"/>
</dbReference>
<dbReference type="InterPro" id="IPR034741">
    <property type="entry name" value="Terpene_cyclase-like_1_C"/>
</dbReference>
<dbReference type="InterPro" id="IPR044814">
    <property type="entry name" value="Terpene_cyclase_plant_C1"/>
</dbReference>
<dbReference type="InterPro" id="IPR001906">
    <property type="entry name" value="Terpene_synth_N"/>
</dbReference>
<dbReference type="InterPro" id="IPR036965">
    <property type="entry name" value="Terpene_synth_N_sf"/>
</dbReference>
<dbReference type="InterPro" id="IPR050148">
    <property type="entry name" value="Terpene_synthase-like"/>
</dbReference>
<dbReference type="InterPro" id="IPR005630">
    <property type="entry name" value="Terpene_synthase_metal-bd"/>
</dbReference>
<dbReference type="InterPro" id="IPR008930">
    <property type="entry name" value="Terpenoid_cyclase/PrenylTrfase"/>
</dbReference>
<dbReference type="PANTHER" id="PTHR31225:SF93">
    <property type="entry name" value="ALPHA-HUMULENE_(-)-(E)-BETA-CARYOPHYLLENE SYNTHASE"/>
    <property type="match status" value="1"/>
</dbReference>
<dbReference type="PANTHER" id="PTHR31225">
    <property type="entry name" value="OS04G0344100 PROTEIN-RELATED"/>
    <property type="match status" value="1"/>
</dbReference>
<dbReference type="Pfam" id="PF01397">
    <property type="entry name" value="Terpene_synth"/>
    <property type="match status" value="1"/>
</dbReference>
<dbReference type="Pfam" id="PF03936">
    <property type="entry name" value="Terpene_synth_C"/>
    <property type="match status" value="1"/>
</dbReference>
<dbReference type="SFLD" id="SFLDS00005">
    <property type="entry name" value="Isoprenoid_Synthase_Type_I"/>
    <property type="match status" value="1"/>
</dbReference>
<dbReference type="SFLD" id="SFLDG01019">
    <property type="entry name" value="Terpene_Cyclase_Like_1_C_Termi"/>
    <property type="match status" value="1"/>
</dbReference>
<dbReference type="SUPFAM" id="SSF48239">
    <property type="entry name" value="Terpenoid cyclases/Protein prenyltransferases"/>
    <property type="match status" value="1"/>
</dbReference>
<dbReference type="SUPFAM" id="SSF48576">
    <property type="entry name" value="Terpenoid synthases"/>
    <property type="match status" value="1"/>
</dbReference>
<keyword id="KW-0456">Lyase</keyword>
<keyword id="KW-0460">Magnesium</keyword>
<keyword id="KW-0479">Metal-binding</keyword>
<evidence type="ECO:0000250" key="1">
    <source>
        <dbReference type="UniProtKB" id="A0A1C9J6A7"/>
    </source>
</evidence>
<evidence type="ECO:0000250" key="2">
    <source>
        <dbReference type="UniProtKB" id="Q40577"/>
    </source>
</evidence>
<evidence type="ECO:0000269" key="3">
    <source>
    </source>
</evidence>
<evidence type="ECO:0000303" key="4">
    <source>
    </source>
</evidence>
<evidence type="ECO:0000303" key="5">
    <source ref="1"/>
</evidence>
<evidence type="ECO:0000305" key="6"/>
<name>TPS3_PIPNI</name>
<feature type="chain" id="PRO_0000454953" description="Terpene synthase 3">
    <location>
        <begin position="1"/>
        <end position="561"/>
    </location>
</feature>
<feature type="short sequence motif" description="DDXXD motif" evidence="1">
    <location>
        <begin position="315"/>
        <end position="319"/>
    </location>
</feature>
<feature type="binding site" evidence="2">
    <location>
        <position position="315"/>
    </location>
    <ligand>
        <name>Mg(2+)</name>
        <dbReference type="ChEBI" id="CHEBI:18420"/>
        <label>1</label>
    </ligand>
</feature>
<feature type="binding site" evidence="2">
    <location>
        <position position="315"/>
    </location>
    <ligand>
        <name>Mg(2+)</name>
        <dbReference type="ChEBI" id="CHEBI:18420"/>
        <label>2</label>
    </ligand>
</feature>
<feature type="binding site" evidence="2">
    <location>
        <position position="319"/>
    </location>
    <ligand>
        <name>Mg(2+)</name>
        <dbReference type="ChEBI" id="CHEBI:18420"/>
        <label>1</label>
    </ligand>
</feature>
<feature type="binding site" evidence="2">
    <location>
        <position position="319"/>
    </location>
    <ligand>
        <name>Mg(2+)</name>
        <dbReference type="ChEBI" id="CHEBI:18420"/>
        <label>2</label>
    </ligand>
</feature>
<feature type="binding site" evidence="2">
    <location>
        <position position="458"/>
    </location>
    <ligand>
        <name>Mg(2+)</name>
        <dbReference type="ChEBI" id="CHEBI:18420"/>
        <label>3</label>
    </ligand>
</feature>
<feature type="binding site" evidence="2">
    <location>
        <position position="466"/>
    </location>
    <ligand>
        <name>Mg(2+)</name>
        <dbReference type="ChEBI" id="CHEBI:18420"/>
        <label>3</label>
    </ligand>
</feature>